<feature type="chain" id="PRO_1000078279" description="Adenylate kinase">
    <location>
        <begin position="1"/>
        <end position="187"/>
    </location>
</feature>
<feature type="region of interest" description="NMP" evidence="1">
    <location>
        <begin position="32"/>
        <end position="61"/>
    </location>
</feature>
<feature type="region of interest" description="LID" evidence="1">
    <location>
        <begin position="128"/>
        <end position="134"/>
    </location>
</feature>
<feature type="binding site" evidence="1">
    <location>
        <begin position="12"/>
        <end position="17"/>
    </location>
    <ligand>
        <name>ATP</name>
        <dbReference type="ChEBI" id="CHEBI:30616"/>
    </ligand>
</feature>
<feature type="binding site" evidence="1">
    <location>
        <position position="33"/>
    </location>
    <ligand>
        <name>AMP</name>
        <dbReference type="ChEBI" id="CHEBI:456215"/>
    </ligand>
</feature>
<feature type="binding site" evidence="1">
    <location>
        <position position="38"/>
    </location>
    <ligand>
        <name>AMP</name>
        <dbReference type="ChEBI" id="CHEBI:456215"/>
    </ligand>
</feature>
<feature type="binding site" evidence="1">
    <location>
        <begin position="59"/>
        <end position="61"/>
    </location>
    <ligand>
        <name>AMP</name>
        <dbReference type="ChEBI" id="CHEBI:456215"/>
    </ligand>
</feature>
<feature type="binding site" evidence="1">
    <location>
        <begin position="87"/>
        <end position="90"/>
    </location>
    <ligand>
        <name>AMP</name>
        <dbReference type="ChEBI" id="CHEBI:456215"/>
    </ligand>
</feature>
<feature type="binding site" evidence="1">
    <location>
        <position position="94"/>
    </location>
    <ligand>
        <name>AMP</name>
        <dbReference type="ChEBI" id="CHEBI:456215"/>
    </ligand>
</feature>
<feature type="binding site" evidence="1">
    <location>
        <position position="129"/>
    </location>
    <ligand>
        <name>ATP</name>
        <dbReference type="ChEBI" id="CHEBI:30616"/>
    </ligand>
</feature>
<feature type="binding site" evidence="1">
    <location>
        <position position="131"/>
    </location>
    <ligand>
        <name>AMP</name>
        <dbReference type="ChEBI" id="CHEBI:456215"/>
    </ligand>
</feature>
<feature type="binding site" evidence="1">
    <location>
        <position position="142"/>
    </location>
    <ligand>
        <name>AMP</name>
        <dbReference type="ChEBI" id="CHEBI:456215"/>
    </ligand>
</feature>
<feature type="binding site" evidence="1">
    <location>
        <position position="170"/>
    </location>
    <ligand>
        <name>ATP</name>
        <dbReference type="ChEBI" id="CHEBI:30616"/>
    </ligand>
</feature>
<organism>
    <name type="scientific">Leuconostoc mesenteroides subsp. mesenteroides (strain ATCC 8293 / DSM 20343 / BCRC 11652 / CCM 1803 / JCM 6124 / NCDO 523 / NBRC 100496 / NCIMB 8023 / NCTC 12954 / NRRL B-1118 / 37Y)</name>
    <dbReference type="NCBI Taxonomy" id="203120"/>
    <lineage>
        <taxon>Bacteria</taxon>
        <taxon>Bacillati</taxon>
        <taxon>Bacillota</taxon>
        <taxon>Bacilli</taxon>
        <taxon>Lactobacillales</taxon>
        <taxon>Lactobacillaceae</taxon>
        <taxon>Leuconostoc</taxon>
    </lineage>
</organism>
<gene>
    <name evidence="1" type="primary">adk</name>
    <name type="ordered locus">LEUM_0216</name>
</gene>
<proteinExistence type="inferred from homology"/>
<accession>Q03ZM5</accession>
<keyword id="KW-0067">ATP-binding</keyword>
<keyword id="KW-0963">Cytoplasm</keyword>
<keyword id="KW-0418">Kinase</keyword>
<keyword id="KW-0545">Nucleotide biosynthesis</keyword>
<keyword id="KW-0547">Nucleotide-binding</keyword>
<keyword id="KW-1185">Reference proteome</keyword>
<keyword id="KW-0808">Transferase</keyword>
<sequence length="187" mass="20586">MAKNLILLGLPGAGKGTQADFIVKDYSIVHISTGDIFRANLAENTELGQKARQFMDAGDLVPDEITNAMVADRLNQQDVETGFMLDGYPRNEAQAVFLDKYLSDNGKSVSATLYFEVADTLLRERLLGRGRADDTPEVIDNRLAVNKAANLPLVDYYQKAGVLHTIDGGRELADVYHDVKEVLDNLN</sequence>
<dbReference type="EC" id="2.7.4.3" evidence="1"/>
<dbReference type="EMBL" id="CP000414">
    <property type="protein sequence ID" value="ABJ61347.1"/>
    <property type="molecule type" value="Genomic_DNA"/>
</dbReference>
<dbReference type="RefSeq" id="WP_002816016.1">
    <property type="nucleotide sequence ID" value="NC_008531.1"/>
</dbReference>
<dbReference type="SMR" id="Q03ZM5"/>
<dbReference type="EnsemblBacteria" id="ABJ61347">
    <property type="protein sequence ID" value="ABJ61347"/>
    <property type="gene ID" value="LEUM_0216"/>
</dbReference>
<dbReference type="GeneID" id="29576692"/>
<dbReference type="KEGG" id="lme:LEUM_0216"/>
<dbReference type="eggNOG" id="COG0563">
    <property type="taxonomic scope" value="Bacteria"/>
</dbReference>
<dbReference type="HOGENOM" id="CLU_032354_4_1_9"/>
<dbReference type="UniPathway" id="UPA00588">
    <property type="reaction ID" value="UER00649"/>
</dbReference>
<dbReference type="Proteomes" id="UP000000362">
    <property type="component" value="Chromosome"/>
</dbReference>
<dbReference type="GO" id="GO:0005737">
    <property type="term" value="C:cytoplasm"/>
    <property type="evidence" value="ECO:0007669"/>
    <property type="project" value="UniProtKB-SubCell"/>
</dbReference>
<dbReference type="GO" id="GO:0004017">
    <property type="term" value="F:adenylate kinase activity"/>
    <property type="evidence" value="ECO:0007669"/>
    <property type="project" value="UniProtKB-UniRule"/>
</dbReference>
<dbReference type="GO" id="GO:0005524">
    <property type="term" value="F:ATP binding"/>
    <property type="evidence" value="ECO:0007669"/>
    <property type="project" value="UniProtKB-UniRule"/>
</dbReference>
<dbReference type="GO" id="GO:0044209">
    <property type="term" value="P:AMP salvage"/>
    <property type="evidence" value="ECO:0007669"/>
    <property type="project" value="UniProtKB-UniRule"/>
</dbReference>
<dbReference type="CDD" id="cd01428">
    <property type="entry name" value="ADK"/>
    <property type="match status" value="1"/>
</dbReference>
<dbReference type="Gene3D" id="3.40.50.300">
    <property type="entry name" value="P-loop containing nucleotide triphosphate hydrolases"/>
    <property type="match status" value="1"/>
</dbReference>
<dbReference type="HAMAP" id="MF_00235">
    <property type="entry name" value="Adenylate_kinase_Adk"/>
    <property type="match status" value="1"/>
</dbReference>
<dbReference type="InterPro" id="IPR000850">
    <property type="entry name" value="Adenylat/UMP-CMP_kin"/>
</dbReference>
<dbReference type="InterPro" id="IPR033690">
    <property type="entry name" value="Adenylat_kinase_CS"/>
</dbReference>
<dbReference type="InterPro" id="IPR027417">
    <property type="entry name" value="P-loop_NTPase"/>
</dbReference>
<dbReference type="NCBIfam" id="NF001381">
    <property type="entry name" value="PRK00279.1-3"/>
    <property type="match status" value="1"/>
</dbReference>
<dbReference type="NCBIfam" id="NF011100">
    <property type="entry name" value="PRK14527.1"/>
    <property type="match status" value="1"/>
</dbReference>
<dbReference type="PANTHER" id="PTHR23359">
    <property type="entry name" value="NUCLEOTIDE KINASE"/>
    <property type="match status" value="1"/>
</dbReference>
<dbReference type="Pfam" id="PF00406">
    <property type="entry name" value="ADK"/>
    <property type="match status" value="1"/>
</dbReference>
<dbReference type="PRINTS" id="PR00094">
    <property type="entry name" value="ADENYLTKNASE"/>
</dbReference>
<dbReference type="SUPFAM" id="SSF52540">
    <property type="entry name" value="P-loop containing nucleoside triphosphate hydrolases"/>
    <property type="match status" value="1"/>
</dbReference>
<dbReference type="PROSITE" id="PS00113">
    <property type="entry name" value="ADENYLATE_KINASE"/>
    <property type="match status" value="1"/>
</dbReference>
<comment type="function">
    <text evidence="1">Catalyzes the reversible transfer of the terminal phosphate group between ATP and AMP. Plays an important role in cellular energy homeostasis and in adenine nucleotide metabolism.</text>
</comment>
<comment type="catalytic activity">
    <reaction evidence="1">
        <text>AMP + ATP = 2 ADP</text>
        <dbReference type="Rhea" id="RHEA:12973"/>
        <dbReference type="ChEBI" id="CHEBI:30616"/>
        <dbReference type="ChEBI" id="CHEBI:456215"/>
        <dbReference type="ChEBI" id="CHEBI:456216"/>
        <dbReference type="EC" id="2.7.4.3"/>
    </reaction>
</comment>
<comment type="pathway">
    <text evidence="1">Purine metabolism; AMP biosynthesis via salvage pathway; AMP from ADP: step 1/1.</text>
</comment>
<comment type="subunit">
    <text evidence="1">Monomer.</text>
</comment>
<comment type="subcellular location">
    <subcellularLocation>
        <location evidence="1">Cytoplasm</location>
    </subcellularLocation>
</comment>
<comment type="domain">
    <text evidence="1">Consists of three domains, a large central CORE domain and two small peripheral domains, NMPbind and LID, which undergo movements during catalysis. The LID domain closes over the site of phosphoryl transfer upon ATP binding. Assembling and dissambling the active center during each catalytic cycle provides an effective means to prevent ATP hydrolysis.</text>
</comment>
<comment type="similarity">
    <text evidence="1">Belongs to the adenylate kinase family.</text>
</comment>
<protein>
    <recommendedName>
        <fullName evidence="1">Adenylate kinase</fullName>
        <shortName evidence="1">AK</shortName>
        <ecNumber evidence="1">2.7.4.3</ecNumber>
    </recommendedName>
    <alternativeName>
        <fullName evidence="1">ATP-AMP transphosphorylase</fullName>
    </alternativeName>
    <alternativeName>
        <fullName evidence="1">ATP:AMP phosphotransferase</fullName>
    </alternativeName>
    <alternativeName>
        <fullName evidence="1">Adenylate monophosphate kinase</fullName>
    </alternativeName>
</protein>
<reference key="1">
    <citation type="journal article" date="2006" name="Proc. Natl. Acad. Sci. U.S.A.">
        <title>Comparative genomics of the lactic acid bacteria.</title>
        <authorList>
            <person name="Makarova K.S."/>
            <person name="Slesarev A."/>
            <person name="Wolf Y.I."/>
            <person name="Sorokin A."/>
            <person name="Mirkin B."/>
            <person name="Koonin E.V."/>
            <person name="Pavlov A."/>
            <person name="Pavlova N."/>
            <person name="Karamychev V."/>
            <person name="Polouchine N."/>
            <person name="Shakhova V."/>
            <person name="Grigoriev I."/>
            <person name="Lou Y."/>
            <person name="Rohksar D."/>
            <person name="Lucas S."/>
            <person name="Huang K."/>
            <person name="Goodstein D.M."/>
            <person name="Hawkins T."/>
            <person name="Plengvidhya V."/>
            <person name="Welker D."/>
            <person name="Hughes J."/>
            <person name="Goh Y."/>
            <person name="Benson A."/>
            <person name="Baldwin K."/>
            <person name="Lee J.-H."/>
            <person name="Diaz-Muniz I."/>
            <person name="Dosti B."/>
            <person name="Smeianov V."/>
            <person name="Wechter W."/>
            <person name="Barabote R."/>
            <person name="Lorca G."/>
            <person name="Altermann E."/>
            <person name="Barrangou R."/>
            <person name="Ganesan B."/>
            <person name="Xie Y."/>
            <person name="Rawsthorne H."/>
            <person name="Tamir D."/>
            <person name="Parker C."/>
            <person name="Breidt F."/>
            <person name="Broadbent J.R."/>
            <person name="Hutkins R."/>
            <person name="O'Sullivan D."/>
            <person name="Steele J."/>
            <person name="Unlu G."/>
            <person name="Saier M.H. Jr."/>
            <person name="Klaenhammer T."/>
            <person name="Richardson P."/>
            <person name="Kozyavkin S."/>
            <person name="Weimer B.C."/>
            <person name="Mills D.A."/>
        </authorList>
    </citation>
    <scope>NUCLEOTIDE SEQUENCE [LARGE SCALE GENOMIC DNA]</scope>
    <source>
        <strain>ATCC 8293 / DSM 20343 / BCRC 11652 / CCM 1803 / JCM 6124 / NCDO 523 / NBRC 100496 / NCIMB 8023 / NCTC 12954 / NRRL B-1118 / 37Y</strain>
    </source>
</reference>
<evidence type="ECO:0000255" key="1">
    <source>
        <dbReference type="HAMAP-Rule" id="MF_00235"/>
    </source>
</evidence>
<name>KAD_LEUMM</name>